<feature type="chain" id="PRO_1000125056" description="Phosphoenolpyruvate carboxykinase (ATP)">
    <location>
        <begin position="1"/>
        <end position="528"/>
    </location>
</feature>
<feature type="binding site" evidence="1">
    <location>
        <position position="56"/>
    </location>
    <ligand>
        <name>substrate</name>
    </ligand>
</feature>
<feature type="binding site" evidence="1">
    <location>
        <position position="192"/>
    </location>
    <ligand>
        <name>substrate</name>
    </ligand>
</feature>
<feature type="binding site" evidence="1">
    <location>
        <position position="198"/>
    </location>
    <ligand>
        <name>ATP</name>
        <dbReference type="ChEBI" id="CHEBI:30616"/>
    </ligand>
</feature>
<feature type="binding site" evidence="1">
    <location>
        <position position="198"/>
    </location>
    <ligand>
        <name>Mn(2+)</name>
        <dbReference type="ChEBI" id="CHEBI:29035"/>
    </ligand>
</feature>
<feature type="binding site" evidence="1">
    <location>
        <position position="198"/>
    </location>
    <ligand>
        <name>substrate</name>
    </ligand>
</feature>
<feature type="binding site" evidence="1">
    <location>
        <position position="217"/>
    </location>
    <ligand>
        <name>ATP</name>
        <dbReference type="ChEBI" id="CHEBI:30616"/>
    </ligand>
</feature>
<feature type="binding site" evidence="1">
    <location>
        <position position="217"/>
    </location>
    <ligand>
        <name>Mn(2+)</name>
        <dbReference type="ChEBI" id="CHEBI:29035"/>
    </ligand>
</feature>
<feature type="binding site" evidence="1">
    <location>
        <begin position="233"/>
        <end position="241"/>
    </location>
    <ligand>
        <name>ATP</name>
        <dbReference type="ChEBI" id="CHEBI:30616"/>
    </ligand>
</feature>
<feature type="binding site" evidence="1">
    <location>
        <position position="254"/>
    </location>
    <ligand>
        <name>Mn(2+)</name>
        <dbReference type="ChEBI" id="CHEBI:29035"/>
    </ligand>
</feature>
<feature type="binding site" evidence="1">
    <location>
        <position position="282"/>
    </location>
    <ligand>
        <name>ATP</name>
        <dbReference type="ChEBI" id="CHEBI:30616"/>
    </ligand>
</feature>
<feature type="binding site" evidence="1">
    <location>
        <position position="319"/>
    </location>
    <ligand>
        <name>ATP</name>
        <dbReference type="ChEBI" id="CHEBI:30616"/>
    </ligand>
</feature>
<feature type="binding site" evidence="1">
    <location>
        <position position="319"/>
    </location>
    <ligand>
        <name>substrate</name>
    </ligand>
</feature>
<feature type="binding site" evidence="1">
    <location>
        <position position="444"/>
    </location>
    <ligand>
        <name>ATP</name>
        <dbReference type="ChEBI" id="CHEBI:30616"/>
    </ligand>
</feature>
<proteinExistence type="inferred from homology"/>
<gene>
    <name evidence="1" type="primary">pckA</name>
    <name type="ordered locus">BCAH187_A4906</name>
</gene>
<reference key="1">
    <citation type="submission" date="2008-10" db="EMBL/GenBank/DDBJ databases">
        <title>Genome sequence of Bacillus cereus AH187.</title>
        <authorList>
            <person name="Dodson R.J."/>
            <person name="Durkin A.S."/>
            <person name="Rosovitz M.J."/>
            <person name="Rasko D.A."/>
            <person name="Kolsto A.B."/>
            <person name="Okstad O.A."/>
            <person name="Ravel J."/>
            <person name="Sutton G."/>
        </authorList>
    </citation>
    <scope>NUCLEOTIDE SEQUENCE [LARGE SCALE GENOMIC DNA]</scope>
    <source>
        <strain>AH187</strain>
    </source>
</reference>
<name>PCKA_BACC7</name>
<protein>
    <recommendedName>
        <fullName evidence="1">Phosphoenolpyruvate carboxykinase (ATP)</fullName>
        <shortName evidence="1">PCK</shortName>
        <shortName evidence="1">PEP carboxykinase</shortName>
        <shortName evidence="1">PEPCK</shortName>
        <ecNumber evidence="1">4.1.1.49</ecNumber>
    </recommendedName>
</protein>
<keyword id="KW-0067">ATP-binding</keyword>
<keyword id="KW-0963">Cytoplasm</keyword>
<keyword id="KW-0210">Decarboxylase</keyword>
<keyword id="KW-0312">Gluconeogenesis</keyword>
<keyword id="KW-0456">Lyase</keyword>
<keyword id="KW-0464">Manganese</keyword>
<keyword id="KW-0479">Metal-binding</keyword>
<keyword id="KW-0547">Nucleotide-binding</keyword>
<comment type="function">
    <text evidence="1">Involved in the gluconeogenesis. Catalyzes the conversion of oxaloacetate (OAA) to phosphoenolpyruvate (PEP) through direct phosphoryl transfer between the nucleoside triphosphate and OAA.</text>
</comment>
<comment type="catalytic activity">
    <reaction evidence="1">
        <text>oxaloacetate + ATP = phosphoenolpyruvate + ADP + CO2</text>
        <dbReference type="Rhea" id="RHEA:18617"/>
        <dbReference type="ChEBI" id="CHEBI:16452"/>
        <dbReference type="ChEBI" id="CHEBI:16526"/>
        <dbReference type="ChEBI" id="CHEBI:30616"/>
        <dbReference type="ChEBI" id="CHEBI:58702"/>
        <dbReference type="ChEBI" id="CHEBI:456216"/>
        <dbReference type="EC" id="4.1.1.49"/>
    </reaction>
</comment>
<comment type="cofactor">
    <cofactor evidence="1">
        <name>Mn(2+)</name>
        <dbReference type="ChEBI" id="CHEBI:29035"/>
    </cofactor>
    <text evidence="1">Binds 1 Mn(2+) ion per subunit.</text>
</comment>
<comment type="pathway">
    <text evidence="1">Carbohydrate biosynthesis; gluconeogenesis.</text>
</comment>
<comment type="subcellular location">
    <subcellularLocation>
        <location evidence="1">Cytoplasm</location>
    </subcellularLocation>
</comment>
<comment type="similarity">
    <text evidence="1">Belongs to the phosphoenolpyruvate carboxykinase (ATP) family.</text>
</comment>
<dbReference type="EC" id="4.1.1.49" evidence="1"/>
<dbReference type="EMBL" id="CP001177">
    <property type="protein sequence ID" value="ACJ78386.1"/>
    <property type="molecule type" value="Genomic_DNA"/>
</dbReference>
<dbReference type="SMR" id="B7HSV7"/>
<dbReference type="KEGG" id="bcr:BCAH187_A4906"/>
<dbReference type="HOGENOM" id="CLU_018247_0_1_9"/>
<dbReference type="UniPathway" id="UPA00138"/>
<dbReference type="Proteomes" id="UP000002214">
    <property type="component" value="Chromosome"/>
</dbReference>
<dbReference type="GO" id="GO:0005829">
    <property type="term" value="C:cytosol"/>
    <property type="evidence" value="ECO:0007669"/>
    <property type="project" value="TreeGrafter"/>
</dbReference>
<dbReference type="GO" id="GO:0005524">
    <property type="term" value="F:ATP binding"/>
    <property type="evidence" value="ECO:0007669"/>
    <property type="project" value="UniProtKB-UniRule"/>
</dbReference>
<dbReference type="GO" id="GO:0046872">
    <property type="term" value="F:metal ion binding"/>
    <property type="evidence" value="ECO:0007669"/>
    <property type="project" value="UniProtKB-KW"/>
</dbReference>
<dbReference type="GO" id="GO:0004612">
    <property type="term" value="F:phosphoenolpyruvate carboxykinase (ATP) activity"/>
    <property type="evidence" value="ECO:0007669"/>
    <property type="project" value="UniProtKB-UniRule"/>
</dbReference>
<dbReference type="GO" id="GO:0006094">
    <property type="term" value="P:gluconeogenesis"/>
    <property type="evidence" value="ECO:0007669"/>
    <property type="project" value="UniProtKB-UniRule"/>
</dbReference>
<dbReference type="CDD" id="cd00484">
    <property type="entry name" value="PEPCK_ATP"/>
    <property type="match status" value="1"/>
</dbReference>
<dbReference type="FunFam" id="2.170.8.10:FF:000001">
    <property type="entry name" value="Phosphoenolpyruvate carboxykinase (ATP)"/>
    <property type="match status" value="1"/>
</dbReference>
<dbReference type="FunFam" id="3.40.449.10:FF:000001">
    <property type="entry name" value="Phosphoenolpyruvate carboxykinase (ATP)"/>
    <property type="match status" value="1"/>
</dbReference>
<dbReference type="Gene3D" id="3.90.228.20">
    <property type="match status" value="1"/>
</dbReference>
<dbReference type="Gene3D" id="3.40.449.10">
    <property type="entry name" value="Phosphoenolpyruvate Carboxykinase, domain 1"/>
    <property type="match status" value="1"/>
</dbReference>
<dbReference type="Gene3D" id="2.170.8.10">
    <property type="entry name" value="Phosphoenolpyruvate Carboxykinase, domain 2"/>
    <property type="match status" value="1"/>
</dbReference>
<dbReference type="HAMAP" id="MF_00453">
    <property type="entry name" value="PEPCK_ATP"/>
    <property type="match status" value="1"/>
</dbReference>
<dbReference type="InterPro" id="IPR001272">
    <property type="entry name" value="PEP_carboxykinase_ATP"/>
</dbReference>
<dbReference type="InterPro" id="IPR013035">
    <property type="entry name" value="PEP_carboxykinase_C"/>
</dbReference>
<dbReference type="InterPro" id="IPR008210">
    <property type="entry name" value="PEP_carboxykinase_N"/>
</dbReference>
<dbReference type="InterPro" id="IPR015994">
    <property type="entry name" value="PEPCK_ATP_CS"/>
</dbReference>
<dbReference type="NCBIfam" id="TIGR00224">
    <property type="entry name" value="pckA"/>
    <property type="match status" value="1"/>
</dbReference>
<dbReference type="NCBIfam" id="NF006820">
    <property type="entry name" value="PRK09344.1-2"/>
    <property type="match status" value="1"/>
</dbReference>
<dbReference type="NCBIfam" id="NF006821">
    <property type="entry name" value="PRK09344.1-3"/>
    <property type="match status" value="1"/>
</dbReference>
<dbReference type="PANTHER" id="PTHR30031:SF0">
    <property type="entry name" value="PHOSPHOENOLPYRUVATE CARBOXYKINASE (ATP)"/>
    <property type="match status" value="1"/>
</dbReference>
<dbReference type="PANTHER" id="PTHR30031">
    <property type="entry name" value="PHOSPHOENOLPYRUVATE CARBOXYKINASE ATP"/>
    <property type="match status" value="1"/>
</dbReference>
<dbReference type="Pfam" id="PF01293">
    <property type="entry name" value="PEPCK_ATP"/>
    <property type="match status" value="1"/>
</dbReference>
<dbReference type="PIRSF" id="PIRSF006294">
    <property type="entry name" value="PEP_crbxkin"/>
    <property type="match status" value="1"/>
</dbReference>
<dbReference type="SUPFAM" id="SSF68923">
    <property type="entry name" value="PEP carboxykinase N-terminal domain"/>
    <property type="match status" value="1"/>
</dbReference>
<dbReference type="SUPFAM" id="SSF53795">
    <property type="entry name" value="PEP carboxykinase-like"/>
    <property type="match status" value="1"/>
</dbReference>
<dbReference type="PROSITE" id="PS00532">
    <property type="entry name" value="PEPCK_ATP"/>
    <property type="match status" value="1"/>
</dbReference>
<sequence>MSTVNVQIGLHELLNGSNAQIQLSVPQLVEKVLMRNEGKLTSTGAVSASTGKYTGRSPKDKFIVKEASVADKIAWGAVNQPISEEHFNKLYTKVLEYLKEKEELFVFKGFAGADRNYRLPIQVINEYAWHNLFVHQLFIRPTEEELTTHESEFTIVSAPNFKADPAVDGTNSEAFIMVSFEKRIVLIGGTEYAGEMKKSIFSIMNFLLPEQDILSMHCSANVGEEGDVALFFGLSGTGKTTLSADPNRKLIGDDEHGWSDNGVFNIEGGCYAKCVNLSHEKEPQIFDAITFGSVLENVIINDQTRIADYNDTTLTENTRAAYPMHAIDNIVLPSVAGHPNTIIFLTADASGVLPPISKLSKEQAMYHFLSGYTSKLAGTERGVTSPQATFSTCFGSPFLPLDASRYAEMLGEKIEKHDAKVFLVNTGWTGGEYGVGKRMNLGYTRAMIQAALSGELAKTETAKHDIFGLEVPLHVPGVPDEVLMPEQTWADKAAYKAKAIELANEFKANFKKFDSVSEDIINLGGPIA</sequence>
<accession>B7HSV7</accession>
<organism>
    <name type="scientific">Bacillus cereus (strain AH187)</name>
    <dbReference type="NCBI Taxonomy" id="405534"/>
    <lineage>
        <taxon>Bacteria</taxon>
        <taxon>Bacillati</taxon>
        <taxon>Bacillota</taxon>
        <taxon>Bacilli</taxon>
        <taxon>Bacillales</taxon>
        <taxon>Bacillaceae</taxon>
        <taxon>Bacillus</taxon>
        <taxon>Bacillus cereus group</taxon>
    </lineage>
</organism>
<evidence type="ECO:0000255" key="1">
    <source>
        <dbReference type="HAMAP-Rule" id="MF_00453"/>
    </source>
</evidence>